<accession>Q2NUJ6</accession>
<sequence length="388" mass="41763">MADGWMARIDDALAQRRREQTYRERWALSGGNDRLIRDGDRQYLNFSSNDYLGLARHPEVIAAWQQGAAQAGVGAGGSGHVTGYGLHHQRLEQRLADWLGFPRALLFTSGFAANQALVGALTASGDHILADRLSHASLLEAAMHSPATLRRFAHNDADALQRLLRRDCAGNRLVITEGVFSMDGDRAPLPALAEITRAAGCWLMVDDAHGIGVVGEEGRGCAWAPAGRPDLLVVTFGKAVGVSGAAVLCATPVAEYLLQFARHLIYSTAPPPAQIAAIDAALTVVRRGDALRQRLWDNIVRFRRGAAALGFALAPSDTAIQPLVIGDNLRTLQLAQRLRERGVWLTAIRPPTVPPGSARLRITLTSAHLADDIDTLLEALSDAQLQNA</sequence>
<proteinExistence type="inferred from homology"/>
<evidence type="ECO:0000255" key="1">
    <source>
        <dbReference type="HAMAP-Rule" id="MF_01693"/>
    </source>
</evidence>
<comment type="function">
    <text evidence="1">Catalyzes the decarboxylative condensation of pimeloyl-[acyl-carrier protein] and L-alanine to produce 8-amino-7-oxononanoate (AON), [acyl-carrier protein], and carbon dioxide.</text>
</comment>
<comment type="catalytic activity">
    <reaction evidence="1">
        <text>6-carboxyhexanoyl-[ACP] + L-alanine + H(+) = (8S)-8-amino-7-oxononanoate + holo-[ACP] + CO2</text>
        <dbReference type="Rhea" id="RHEA:42288"/>
        <dbReference type="Rhea" id="RHEA-COMP:9685"/>
        <dbReference type="Rhea" id="RHEA-COMP:9955"/>
        <dbReference type="ChEBI" id="CHEBI:15378"/>
        <dbReference type="ChEBI" id="CHEBI:16526"/>
        <dbReference type="ChEBI" id="CHEBI:57972"/>
        <dbReference type="ChEBI" id="CHEBI:64479"/>
        <dbReference type="ChEBI" id="CHEBI:78846"/>
        <dbReference type="ChEBI" id="CHEBI:149468"/>
        <dbReference type="EC" id="2.3.1.47"/>
    </reaction>
</comment>
<comment type="cofactor">
    <cofactor evidence="1">
        <name>pyridoxal 5'-phosphate</name>
        <dbReference type="ChEBI" id="CHEBI:597326"/>
    </cofactor>
</comment>
<comment type="pathway">
    <text evidence="1">Cofactor biosynthesis; biotin biosynthesis.</text>
</comment>
<comment type="subunit">
    <text evidence="1">Homodimer.</text>
</comment>
<comment type="similarity">
    <text evidence="1">Belongs to the class-II pyridoxal-phosphate-dependent aminotransferase family. BioF subfamily.</text>
</comment>
<name>BIOF_SODGM</name>
<dbReference type="EC" id="2.3.1.47" evidence="1"/>
<dbReference type="EMBL" id="AP008232">
    <property type="protein sequence ID" value="BAE74179.1"/>
    <property type="molecule type" value="Genomic_DNA"/>
</dbReference>
<dbReference type="RefSeq" id="WP_011410765.1">
    <property type="nucleotide sequence ID" value="NC_007712.1"/>
</dbReference>
<dbReference type="SMR" id="Q2NUJ6"/>
<dbReference type="STRING" id="343509.SG0904"/>
<dbReference type="KEGG" id="sgl:SG0904"/>
<dbReference type="eggNOG" id="COG0156">
    <property type="taxonomic scope" value="Bacteria"/>
</dbReference>
<dbReference type="HOGENOM" id="CLU_015846_11_2_6"/>
<dbReference type="OrthoDB" id="9807157at2"/>
<dbReference type="BioCyc" id="SGLO343509:SGP1_RS07690-MONOMER"/>
<dbReference type="UniPathway" id="UPA00078"/>
<dbReference type="Proteomes" id="UP000001932">
    <property type="component" value="Chromosome"/>
</dbReference>
<dbReference type="GO" id="GO:0008710">
    <property type="term" value="F:8-amino-7-oxononanoate synthase activity"/>
    <property type="evidence" value="ECO:0007669"/>
    <property type="project" value="UniProtKB-UniRule"/>
</dbReference>
<dbReference type="GO" id="GO:0030170">
    <property type="term" value="F:pyridoxal phosphate binding"/>
    <property type="evidence" value="ECO:0007669"/>
    <property type="project" value="UniProtKB-UniRule"/>
</dbReference>
<dbReference type="GO" id="GO:0009102">
    <property type="term" value="P:biotin biosynthetic process"/>
    <property type="evidence" value="ECO:0007669"/>
    <property type="project" value="UniProtKB-UniRule"/>
</dbReference>
<dbReference type="CDD" id="cd06454">
    <property type="entry name" value="KBL_like"/>
    <property type="match status" value="1"/>
</dbReference>
<dbReference type="Gene3D" id="3.90.1150.10">
    <property type="entry name" value="Aspartate Aminotransferase, domain 1"/>
    <property type="match status" value="1"/>
</dbReference>
<dbReference type="Gene3D" id="3.40.640.10">
    <property type="entry name" value="Type I PLP-dependent aspartate aminotransferase-like (Major domain)"/>
    <property type="match status" value="1"/>
</dbReference>
<dbReference type="HAMAP" id="MF_01693">
    <property type="entry name" value="BioF_aminotrans_2"/>
    <property type="match status" value="1"/>
</dbReference>
<dbReference type="InterPro" id="IPR001917">
    <property type="entry name" value="Aminotrans_II_pyridoxalP_BS"/>
</dbReference>
<dbReference type="InterPro" id="IPR004839">
    <property type="entry name" value="Aminotransferase_I/II_large"/>
</dbReference>
<dbReference type="InterPro" id="IPR050087">
    <property type="entry name" value="AON_synthase_class-II"/>
</dbReference>
<dbReference type="InterPro" id="IPR004723">
    <property type="entry name" value="AONS_Archaea/Proteobacteria"/>
</dbReference>
<dbReference type="InterPro" id="IPR022834">
    <property type="entry name" value="AONS_Proteobacteria"/>
</dbReference>
<dbReference type="InterPro" id="IPR015424">
    <property type="entry name" value="PyrdxlP-dep_Trfase"/>
</dbReference>
<dbReference type="InterPro" id="IPR015421">
    <property type="entry name" value="PyrdxlP-dep_Trfase_major"/>
</dbReference>
<dbReference type="InterPro" id="IPR015422">
    <property type="entry name" value="PyrdxlP-dep_Trfase_small"/>
</dbReference>
<dbReference type="NCBIfam" id="TIGR00858">
    <property type="entry name" value="bioF"/>
    <property type="match status" value="1"/>
</dbReference>
<dbReference type="PANTHER" id="PTHR13693:SF100">
    <property type="entry name" value="8-AMINO-7-OXONONANOATE SYNTHASE"/>
    <property type="match status" value="1"/>
</dbReference>
<dbReference type="PANTHER" id="PTHR13693">
    <property type="entry name" value="CLASS II AMINOTRANSFERASE/8-AMINO-7-OXONONANOATE SYNTHASE"/>
    <property type="match status" value="1"/>
</dbReference>
<dbReference type="Pfam" id="PF00155">
    <property type="entry name" value="Aminotran_1_2"/>
    <property type="match status" value="1"/>
</dbReference>
<dbReference type="SUPFAM" id="SSF53383">
    <property type="entry name" value="PLP-dependent transferases"/>
    <property type="match status" value="1"/>
</dbReference>
<dbReference type="PROSITE" id="PS00599">
    <property type="entry name" value="AA_TRANSFER_CLASS_2"/>
    <property type="match status" value="1"/>
</dbReference>
<reference key="1">
    <citation type="journal article" date="2006" name="Genome Res.">
        <title>Massive genome erosion and functional adaptations provide insights into the symbiotic lifestyle of Sodalis glossinidius in the tsetse host.</title>
        <authorList>
            <person name="Toh H."/>
            <person name="Weiss B.L."/>
            <person name="Perkin S.A.H."/>
            <person name="Yamashita A."/>
            <person name="Oshima K."/>
            <person name="Hattori M."/>
            <person name="Aksoy S."/>
        </authorList>
    </citation>
    <scope>NUCLEOTIDE SEQUENCE [LARGE SCALE GENOMIC DNA]</scope>
    <source>
        <strain>morsitans</strain>
    </source>
</reference>
<organism>
    <name type="scientific">Sodalis glossinidius (strain morsitans)</name>
    <dbReference type="NCBI Taxonomy" id="343509"/>
    <lineage>
        <taxon>Bacteria</taxon>
        <taxon>Pseudomonadati</taxon>
        <taxon>Pseudomonadota</taxon>
        <taxon>Gammaproteobacteria</taxon>
        <taxon>Enterobacterales</taxon>
        <taxon>Bruguierivoracaceae</taxon>
        <taxon>Sodalis</taxon>
    </lineage>
</organism>
<feature type="chain" id="PRO_0000381114" description="8-amino-7-oxononanoate synthase">
    <location>
        <begin position="1"/>
        <end position="388"/>
    </location>
</feature>
<feature type="binding site" evidence="1">
    <location>
        <position position="23"/>
    </location>
    <ligand>
        <name>substrate</name>
    </ligand>
</feature>
<feature type="binding site" evidence="1">
    <location>
        <begin position="110"/>
        <end position="111"/>
    </location>
    <ligand>
        <name>pyridoxal 5'-phosphate</name>
        <dbReference type="ChEBI" id="CHEBI:597326"/>
    </ligand>
</feature>
<feature type="binding site" evidence="1">
    <location>
        <position position="135"/>
    </location>
    <ligand>
        <name>substrate</name>
    </ligand>
</feature>
<feature type="binding site" evidence="1">
    <location>
        <position position="181"/>
    </location>
    <ligand>
        <name>pyridoxal 5'-phosphate</name>
        <dbReference type="ChEBI" id="CHEBI:597326"/>
    </ligand>
</feature>
<feature type="binding site" evidence="1">
    <location>
        <position position="209"/>
    </location>
    <ligand>
        <name>pyridoxal 5'-phosphate</name>
        <dbReference type="ChEBI" id="CHEBI:597326"/>
    </ligand>
</feature>
<feature type="binding site" evidence="1">
    <location>
        <position position="235"/>
    </location>
    <ligand>
        <name>pyridoxal 5'-phosphate</name>
        <dbReference type="ChEBI" id="CHEBI:597326"/>
    </ligand>
</feature>
<feature type="binding site" evidence="1">
    <location>
        <position position="352"/>
    </location>
    <ligand>
        <name>substrate</name>
    </ligand>
</feature>
<feature type="modified residue" description="N6-(pyridoxal phosphate)lysine" evidence="1">
    <location>
        <position position="238"/>
    </location>
</feature>
<gene>
    <name evidence="1" type="primary">bioF</name>
    <name type="ordered locus">SG0904</name>
</gene>
<keyword id="KW-0093">Biotin biosynthesis</keyword>
<keyword id="KW-0663">Pyridoxal phosphate</keyword>
<keyword id="KW-0808">Transferase</keyword>
<protein>
    <recommendedName>
        <fullName evidence="1">8-amino-7-oxononanoate synthase</fullName>
        <shortName evidence="1">AONS</shortName>
        <ecNumber evidence="1">2.3.1.47</ecNumber>
    </recommendedName>
    <alternativeName>
        <fullName evidence="1">7-keto-8-amino-pelargonic acid synthase</fullName>
        <shortName evidence="1">7-KAP synthase</shortName>
        <shortName evidence="1">KAPA synthase</shortName>
    </alternativeName>
    <alternativeName>
        <fullName evidence="1">8-amino-7-ketopelargonate synthase</fullName>
    </alternativeName>
</protein>